<protein>
    <recommendedName>
        <fullName>Probable glutaredoxin ssr2061</fullName>
    </recommendedName>
</protein>
<gene>
    <name type="ordered locus">ssr2061</name>
</gene>
<feature type="chain" id="PRO_0000141598" description="Probable glutaredoxin ssr2061">
    <location>
        <begin position="1"/>
        <end position="88"/>
    </location>
</feature>
<feature type="disulfide bond" description="Redox-active" evidence="1">
    <location>
        <begin position="15"/>
        <end position="18"/>
    </location>
</feature>
<feature type="strand" evidence="3">
    <location>
        <begin position="7"/>
        <end position="11"/>
    </location>
</feature>
<feature type="helix" evidence="3">
    <location>
        <begin position="16"/>
        <end position="28"/>
    </location>
</feature>
<feature type="strand" evidence="3">
    <location>
        <begin position="33"/>
        <end position="36"/>
    </location>
</feature>
<feature type="helix" evidence="3">
    <location>
        <begin position="41"/>
        <end position="50"/>
    </location>
</feature>
<feature type="turn" evidence="3">
    <location>
        <begin position="51"/>
        <end position="53"/>
    </location>
</feature>
<feature type="strand" evidence="3">
    <location>
        <begin position="59"/>
        <end position="62"/>
    </location>
</feature>
<feature type="strand" evidence="3">
    <location>
        <begin position="65"/>
        <end position="69"/>
    </location>
</feature>
<feature type="helix" evidence="3">
    <location>
        <begin position="70"/>
        <end position="78"/>
    </location>
</feature>
<feature type="helix" evidence="3">
    <location>
        <begin position="82"/>
        <end position="86"/>
    </location>
</feature>
<comment type="function">
    <text evidence="1">Has a glutathione-disulfide oxidoreductase activity in the presence of NADPH and glutathione reductase. Reduces low molecular weight disulfides and proteins (By similarity).</text>
</comment>
<comment type="interaction">
    <interactant intactId="EBI-6405758">
        <id>P73492</id>
    </interactant>
    <interactant intactId="EBI-6405750">
        <id>Q55980</id>
        <label>sll0662</label>
    </interactant>
    <organismsDiffer>false</organismsDiffer>
    <experiments>2</experiments>
</comment>
<comment type="similarity">
    <text evidence="2">Belongs to the glutaredoxin family.</text>
</comment>
<accession>P73492</accession>
<sequence length="88" mass="9735">MAVSAKIEIYTWSTCPFCMRALALLKRKGVEFQEYCIDGDNEAREAMAARANGKRSLPQIFIDDQHIGGCDDIYALDGAGKLDPLLHS</sequence>
<keyword id="KW-0002">3D-structure</keyword>
<keyword id="KW-1015">Disulfide bond</keyword>
<keyword id="KW-0249">Electron transport</keyword>
<keyword id="KW-0676">Redox-active center</keyword>
<keyword id="KW-1185">Reference proteome</keyword>
<keyword id="KW-0813">Transport</keyword>
<proteinExistence type="evidence at protein level"/>
<name>GLRX2_SYNY3</name>
<reference key="1">
    <citation type="journal article" date="1996" name="DNA Res.">
        <title>Sequence analysis of the genome of the unicellular cyanobacterium Synechocystis sp. strain PCC6803. II. Sequence determination of the entire genome and assignment of potential protein-coding regions.</title>
        <authorList>
            <person name="Kaneko T."/>
            <person name="Sato S."/>
            <person name="Kotani H."/>
            <person name="Tanaka A."/>
            <person name="Asamizu E."/>
            <person name="Nakamura Y."/>
            <person name="Miyajima N."/>
            <person name="Hirosawa M."/>
            <person name="Sugiura M."/>
            <person name="Sasamoto S."/>
            <person name="Kimura T."/>
            <person name="Hosouchi T."/>
            <person name="Matsuno A."/>
            <person name="Muraki A."/>
            <person name="Nakazaki N."/>
            <person name="Naruo K."/>
            <person name="Okumura S."/>
            <person name="Shimpo S."/>
            <person name="Takeuchi C."/>
            <person name="Wada T."/>
            <person name="Watanabe A."/>
            <person name="Yamada M."/>
            <person name="Yasuda M."/>
            <person name="Tabata S."/>
        </authorList>
    </citation>
    <scope>NUCLEOTIDE SEQUENCE [LARGE SCALE GENOMIC DNA]</scope>
    <source>
        <strain>ATCC 27184 / PCC 6803 / Kazusa</strain>
    </source>
</reference>
<organism>
    <name type="scientific">Synechocystis sp. (strain ATCC 27184 / PCC 6803 / Kazusa)</name>
    <dbReference type="NCBI Taxonomy" id="1111708"/>
    <lineage>
        <taxon>Bacteria</taxon>
        <taxon>Bacillati</taxon>
        <taxon>Cyanobacteriota</taxon>
        <taxon>Cyanophyceae</taxon>
        <taxon>Synechococcales</taxon>
        <taxon>Merismopediaceae</taxon>
        <taxon>Synechocystis</taxon>
    </lineage>
</organism>
<evidence type="ECO:0000250" key="1"/>
<evidence type="ECO:0000305" key="2"/>
<evidence type="ECO:0007829" key="3">
    <source>
        <dbReference type="PDB" id="4MJE"/>
    </source>
</evidence>
<dbReference type="EMBL" id="BA000022">
    <property type="protein sequence ID" value="BAA17532.1"/>
    <property type="molecule type" value="Genomic_DNA"/>
</dbReference>
<dbReference type="PIR" id="S77429">
    <property type="entry name" value="S77429"/>
</dbReference>
<dbReference type="PDB" id="3QMX">
    <property type="method" value="X-ray"/>
    <property type="resolution" value="1.82 A"/>
    <property type="chains" value="A=2-88"/>
</dbReference>
<dbReference type="PDB" id="4MJA">
    <property type="method" value="X-ray"/>
    <property type="resolution" value="2.00 A"/>
    <property type="chains" value="A=2-88"/>
</dbReference>
<dbReference type="PDB" id="4MJB">
    <property type="method" value="X-ray"/>
    <property type="resolution" value="2.11 A"/>
    <property type="chains" value="A=2-88"/>
</dbReference>
<dbReference type="PDB" id="4MJC">
    <property type="method" value="X-ray"/>
    <property type="resolution" value="1.41 A"/>
    <property type="chains" value="A=2-88"/>
</dbReference>
<dbReference type="PDB" id="4MJE">
    <property type="method" value="X-ray"/>
    <property type="resolution" value="1.20 A"/>
    <property type="chains" value="A=2-88"/>
</dbReference>
<dbReference type="PDBsum" id="3QMX"/>
<dbReference type="PDBsum" id="4MJA"/>
<dbReference type="PDBsum" id="4MJB"/>
<dbReference type="PDBsum" id="4MJC"/>
<dbReference type="PDBsum" id="4MJE"/>
<dbReference type="SMR" id="P73492"/>
<dbReference type="IntAct" id="P73492">
    <property type="interactions" value="2"/>
</dbReference>
<dbReference type="STRING" id="1148.gene:10498397"/>
<dbReference type="PaxDb" id="1148-1652611"/>
<dbReference type="EnsemblBacteria" id="BAA17532">
    <property type="protein sequence ID" value="BAA17532"/>
    <property type="gene ID" value="BAA17532"/>
</dbReference>
<dbReference type="KEGG" id="syn:ssr2061"/>
<dbReference type="eggNOG" id="COG0695">
    <property type="taxonomic scope" value="Bacteria"/>
</dbReference>
<dbReference type="InParanoid" id="P73492"/>
<dbReference type="PhylomeDB" id="P73492"/>
<dbReference type="EvolutionaryTrace" id="P73492"/>
<dbReference type="Proteomes" id="UP000001425">
    <property type="component" value="Chromosome"/>
</dbReference>
<dbReference type="GO" id="GO:0005737">
    <property type="term" value="C:cytoplasm"/>
    <property type="evidence" value="ECO:0000318"/>
    <property type="project" value="GO_Central"/>
</dbReference>
<dbReference type="GO" id="GO:0015038">
    <property type="term" value="F:glutathione disulfide oxidoreductase activity"/>
    <property type="evidence" value="ECO:0000318"/>
    <property type="project" value="GO_Central"/>
</dbReference>
<dbReference type="GO" id="GO:0045454">
    <property type="term" value="P:cell redox homeostasis"/>
    <property type="evidence" value="ECO:0007669"/>
    <property type="project" value="InterPro"/>
</dbReference>
<dbReference type="GO" id="GO:0034599">
    <property type="term" value="P:cellular response to oxidative stress"/>
    <property type="evidence" value="ECO:0000318"/>
    <property type="project" value="GO_Central"/>
</dbReference>
<dbReference type="CDD" id="cd03418">
    <property type="entry name" value="GRX_GRXb_1_3_like"/>
    <property type="match status" value="1"/>
</dbReference>
<dbReference type="FunFam" id="3.40.30.10:FF:000018">
    <property type="entry name" value="Glutaredoxin"/>
    <property type="match status" value="1"/>
</dbReference>
<dbReference type="Gene3D" id="3.40.30.10">
    <property type="entry name" value="Glutaredoxin"/>
    <property type="match status" value="1"/>
</dbReference>
<dbReference type="InterPro" id="IPR011767">
    <property type="entry name" value="GLR_AS"/>
</dbReference>
<dbReference type="InterPro" id="IPR002109">
    <property type="entry name" value="Glutaredoxin"/>
</dbReference>
<dbReference type="InterPro" id="IPR014025">
    <property type="entry name" value="Glutaredoxin_subgr"/>
</dbReference>
<dbReference type="InterPro" id="IPR004045">
    <property type="entry name" value="Glutathione_S-Trfase_N"/>
</dbReference>
<dbReference type="InterPro" id="IPR011900">
    <property type="entry name" value="GRX_bact"/>
</dbReference>
<dbReference type="InterPro" id="IPR036249">
    <property type="entry name" value="Thioredoxin-like_sf"/>
</dbReference>
<dbReference type="NCBIfam" id="TIGR02181">
    <property type="entry name" value="GRX_bact"/>
    <property type="match status" value="1"/>
</dbReference>
<dbReference type="PANTHER" id="PTHR45694">
    <property type="entry name" value="GLUTAREDOXIN 2"/>
    <property type="match status" value="1"/>
</dbReference>
<dbReference type="PANTHER" id="PTHR45694:SF18">
    <property type="entry name" value="GLUTAREDOXIN-1-RELATED"/>
    <property type="match status" value="1"/>
</dbReference>
<dbReference type="Pfam" id="PF00462">
    <property type="entry name" value="Glutaredoxin"/>
    <property type="match status" value="1"/>
</dbReference>
<dbReference type="PRINTS" id="PR00160">
    <property type="entry name" value="GLUTAREDOXIN"/>
</dbReference>
<dbReference type="SUPFAM" id="SSF52833">
    <property type="entry name" value="Thioredoxin-like"/>
    <property type="match status" value="1"/>
</dbReference>
<dbReference type="PROSITE" id="PS00195">
    <property type="entry name" value="GLUTAREDOXIN_1"/>
    <property type="match status" value="1"/>
</dbReference>
<dbReference type="PROSITE" id="PS51354">
    <property type="entry name" value="GLUTAREDOXIN_2"/>
    <property type="match status" value="1"/>
</dbReference>